<evidence type="ECO:0000250" key="1"/>
<evidence type="ECO:0000255" key="2"/>
<evidence type="ECO:0000255" key="3">
    <source>
        <dbReference type="PROSITE-ProRule" id="PRU00159"/>
    </source>
</evidence>
<evidence type="ECO:0000256" key="4">
    <source>
        <dbReference type="SAM" id="MobiDB-lite"/>
    </source>
</evidence>
<evidence type="ECO:0000269" key="5">
    <source>
    </source>
</evidence>
<evidence type="ECO:0000269" key="6">
    <source>
    </source>
</evidence>
<evidence type="ECO:0000269" key="7">
    <source>
    </source>
</evidence>
<evidence type="ECO:0000269" key="8">
    <source>
    </source>
</evidence>
<evidence type="ECO:0000269" key="9">
    <source>
    </source>
</evidence>
<evidence type="ECO:0000269" key="10">
    <source>
    </source>
</evidence>
<evidence type="ECO:0000269" key="11">
    <source>
    </source>
</evidence>
<evidence type="ECO:0000269" key="12">
    <source>
    </source>
</evidence>
<evidence type="ECO:0000269" key="13">
    <source>
    </source>
</evidence>
<evidence type="ECO:0000269" key="14">
    <source>
    </source>
</evidence>
<evidence type="ECO:0000269" key="15">
    <source>
    </source>
</evidence>
<evidence type="ECO:0000269" key="16">
    <source>
    </source>
</evidence>
<evidence type="ECO:0000269" key="17">
    <source>
    </source>
</evidence>
<evidence type="ECO:0000269" key="18">
    <source>
    </source>
</evidence>
<evidence type="ECO:0000269" key="19">
    <source>
    </source>
</evidence>
<evidence type="ECO:0000269" key="20">
    <source>
    </source>
</evidence>
<evidence type="ECO:0000269" key="21">
    <source>
    </source>
</evidence>
<evidence type="ECO:0000305" key="22"/>
<keyword id="KW-0067">ATP-binding</keyword>
<keyword id="KW-0175">Coiled coil</keyword>
<keyword id="KW-0547">Nucleotide-binding</keyword>
<keyword id="KW-0539">Nucleus</keyword>
<keyword id="KW-0607">Phytochrome signaling pathway</keyword>
<keyword id="KW-1185">Reference proteome</keyword>
<keyword id="KW-0677">Repeat</keyword>
<keyword id="KW-0808">Transferase</keyword>
<keyword id="KW-0833">Ubl conjugation pathway</keyword>
<keyword id="KW-0853">WD repeat</keyword>
<dbReference type="EC" id="2.7.-.-"/>
<dbReference type="EMBL" id="AF135455">
    <property type="protein sequence ID" value="AAD30124.1"/>
    <property type="molecule type" value="mRNA"/>
</dbReference>
<dbReference type="EMBL" id="AC006526">
    <property type="protein sequence ID" value="AAD23037.1"/>
    <property type="status" value="ALT_SEQ"/>
    <property type="molecule type" value="Genomic_DNA"/>
</dbReference>
<dbReference type="EMBL" id="AC006526">
    <property type="protein sequence ID" value="AAD23038.1"/>
    <property type="status" value="ALT_SEQ"/>
    <property type="molecule type" value="Genomic_DNA"/>
</dbReference>
<dbReference type="EMBL" id="CP002685">
    <property type="protein sequence ID" value="AEC10681.1"/>
    <property type="molecule type" value="Genomic_DNA"/>
</dbReference>
<dbReference type="EMBL" id="CP002685">
    <property type="protein sequence ID" value="ANM63147.1"/>
    <property type="molecule type" value="Genomic_DNA"/>
</dbReference>
<dbReference type="EMBL" id="AK227186">
    <property type="protein sequence ID" value="BAE99225.1"/>
    <property type="molecule type" value="mRNA"/>
</dbReference>
<dbReference type="EMBL" id="AK221994">
    <property type="protein sequence ID" value="BAD94577.1"/>
    <property type="molecule type" value="mRNA"/>
</dbReference>
<dbReference type="PIR" id="F84901">
    <property type="entry name" value="F84901"/>
</dbReference>
<dbReference type="PIR" id="G84901">
    <property type="entry name" value="G84901"/>
</dbReference>
<dbReference type="RefSeq" id="NP_001325255.1">
    <property type="nucleotide sequence ID" value="NM_001337186.1"/>
</dbReference>
<dbReference type="RefSeq" id="NP_182157.2">
    <property type="nucleotide sequence ID" value="NM_130197.5"/>
</dbReference>
<dbReference type="SMR" id="Q9SYX2"/>
<dbReference type="BioGRID" id="4577">
    <property type="interactions" value="20"/>
</dbReference>
<dbReference type="DIP" id="DIP-33538N"/>
<dbReference type="FunCoup" id="Q9SYX2">
    <property type="interactions" value="129"/>
</dbReference>
<dbReference type="IntAct" id="Q9SYX2">
    <property type="interactions" value="7"/>
</dbReference>
<dbReference type="STRING" id="3702.Q9SYX2"/>
<dbReference type="iPTMnet" id="Q9SYX2"/>
<dbReference type="PaxDb" id="3702-AT2G46340.1"/>
<dbReference type="ProteomicsDB" id="232481"/>
<dbReference type="EnsemblPlants" id="AT2G46340.1">
    <property type="protein sequence ID" value="AT2G46340.1"/>
    <property type="gene ID" value="AT2G46340"/>
</dbReference>
<dbReference type="EnsemblPlants" id="AT2G46340.2">
    <property type="protein sequence ID" value="AT2G46340.2"/>
    <property type="gene ID" value="AT2G46340"/>
</dbReference>
<dbReference type="GeneID" id="819242"/>
<dbReference type="Gramene" id="AT2G46340.1">
    <property type="protein sequence ID" value="AT2G46340.1"/>
    <property type="gene ID" value="AT2G46340"/>
</dbReference>
<dbReference type="Gramene" id="AT2G46340.2">
    <property type="protein sequence ID" value="AT2G46340.2"/>
    <property type="gene ID" value="AT2G46340"/>
</dbReference>
<dbReference type="KEGG" id="ath:AT2G46340"/>
<dbReference type="Araport" id="AT2G46340"/>
<dbReference type="TAIR" id="AT2G46340">
    <property type="gene designation" value="SPA1"/>
</dbReference>
<dbReference type="eggNOG" id="KOG1033">
    <property type="taxonomic scope" value="Eukaryota"/>
</dbReference>
<dbReference type="HOGENOM" id="CLU_006994_1_1_1"/>
<dbReference type="InParanoid" id="Q9SYX2"/>
<dbReference type="OMA" id="WSINEKR"/>
<dbReference type="PhylomeDB" id="Q9SYX2"/>
<dbReference type="PRO" id="PR:Q9SYX2"/>
<dbReference type="Proteomes" id="UP000006548">
    <property type="component" value="Chromosome 2"/>
</dbReference>
<dbReference type="ExpressionAtlas" id="Q9SYX2">
    <property type="expression patterns" value="baseline and differential"/>
</dbReference>
<dbReference type="GO" id="GO:0080008">
    <property type="term" value="C:Cul4-RING E3 ubiquitin ligase complex"/>
    <property type="evidence" value="ECO:0000250"/>
    <property type="project" value="TAIR"/>
</dbReference>
<dbReference type="GO" id="GO:0016604">
    <property type="term" value="C:nuclear body"/>
    <property type="evidence" value="ECO:0000314"/>
    <property type="project" value="UniProtKB"/>
</dbReference>
<dbReference type="GO" id="GO:0016607">
    <property type="term" value="C:nuclear speck"/>
    <property type="evidence" value="ECO:0007669"/>
    <property type="project" value="UniProtKB-SubCell"/>
</dbReference>
<dbReference type="GO" id="GO:0005634">
    <property type="term" value="C:nucleus"/>
    <property type="evidence" value="ECO:0000314"/>
    <property type="project" value="UniProtKB"/>
</dbReference>
<dbReference type="GO" id="GO:0005524">
    <property type="term" value="F:ATP binding"/>
    <property type="evidence" value="ECO:0007669"/>
    <property type="project" value="UniProtKB-KW"/>
</dbReference>
<dbReference type="GO" id="GO:0042802">
    <property type="term" value="F:identical protein binding"/>
    <property type="evidence" value="ECO:0000353"/>
    <property type="project" value="IntAct"/>
</dbReference>
<dbReference type="GO" id="GO:0004672">
    <property type="term" value="F:protein kinase activity"/>
    <property type="evidence" value="ECO:0007669"/>
    <property type="project" value="InterPro"/>
</dbReference>
<dbReference type="GO" id="GO:0009658">
    <property type="term" value="P:chloroplast organization"/>
    <property type="evidence" value="ECO:0000315"/>
    <property type="project" value="TAIR"/>
</dbReference>
<dbReference type="GO" id="GO:0010100">
    <property type="term" value="P:negative regulation of photomorphogenesis"/>
    <property type="evidence" value="ECO:0000315"/>
    <property type="project" value="TAIR"/>
</dbReference>
<dbReference type="GO" id="GO:0009640">
    <property type="term" value="P:photomorphogenesis"/>
    <property type="evidence" value="ECO:0000315"/>
    <property type="project" value="TAIR"/>
</dbReference>
<dbReference type="GO" id="GO:0010017">
    <property type="term" value="P:red or far-red light signaling pathway"/>
    <property type="evidence" value="ECO:0000315"/>
    <property type="project" value="TAIR"/>
</dbReference>
<dbReference type="GO" id="GO:0009585">
    <property type="term" value="P:red, far-red light phototransduction"/>
    <property type="evidence" value="ECO:0007669"/>
    <property type="project" value="UniProtKB-KW"/>
</dbReference>
<dbReference type="GO" id="GO:2000028">
    <property type="term" value="P:regulation of photoperiodism, flowering"/>
    <property type="evidence" value="ECO:0000314"/>
    <property type="project" value="UniProtKB"/>
</dbReference>
<dbReference type="GO" id="GO:0009637">
    <property type="term" value="P:response to blue light"/>
    <property type="evidence" value="ECO:0000314"/>
    <property type="project" value="UniProtKB"/>
</dbReference>
<dbReference type="GO" id="GO:0010218">
    <property type="term" value="P:response to far red light"/>
    <property type="evidence" value="ECO:0000270"/>
    <property type="project" value="TAIR"/>
</dbReference>
<dbReference type="GO" id="GO:0010114">
    <property type="term" value="P:response to red light"/>
    <property type="evidence" value="ECO:0000270"/>
    <property type="project" value="TAIR"/>
</dbReference>
<dbReference type="GO" id="GO:0048575">
    <property type="term" value="P:short-day photoperiodism, flowering"/>
    <property type="evidence" value="ECO:0000315"/>
    <property type="project" value="TAIR"/>
</dbReference>
<dbReference type="FunFam" id="2.130.10.10:FF:000090">
    <property type="entry name" value="E3 ubiquitin-protein ligase RFWD2 isoform X1"/>
    <property type="match status" value="1"/>
</dbReference>
<dbReference type="Gene3D" id="1.10.510.10">
    <property type="entry name" value="Transferase(Phosphotransferase) domain 1"/>
    <property type="match status" value="1"/>
</dbReference>
<dbReference type="Gene3D" id="2.130.10.10">
    <property type="entry name" value="YVTN repeat-like/Quinoprotein amine dehydrogenase"/>
    <property type="match status" value="1"/>
</dbReference>
<dbReference type="InterPro" id="IPR020472">
    <property type="entry name" value="G-protein_beta_WD-40_rep"/>
</dbReference>
<dbReference type="InterPro" id="IPR011009">
    <property type="entry name" value="Kinase-like_dom_sf"/>
</dbReference>
<dbReference type="InterPro" id="IPR000719">
    <property type="entry name" value="Prot_kinase_dom"/>
</dbReference>
<dbReference type="InterPro" id="IPR044630">
    <property type="entry name" value="SPA1/2/3/4"/>
</dbReference>
<dbReference type="InterPro" id="IPR015943">
    <property type="entry name" value="WD40/YVTN_repeat-like_dom_sf"/>
</dbReference>
<dbReference type="InterPro" id="IPR019775">
    <property type="entry name" value="WD40_repeat_CS"/>
</dbReference>
<dbReference type="InterPro" id="IPR036322">
    <property type="entry name" value="WD40_repeat_dom_sf"/>
</dbReference>
<dbReference type="InterPro" id="IPR001680">
    <property type="entry name" value="WD40_rpt"/>
</dbReference>
<dbReference type="PANTHER" id="PTHR44218">
    <property type="entry name" value="PROTEIN SPA1-RELATED 2"/>
    <property type="match status" value="1"/>
</dbReference>
<dbReference type="PANTHER" id="PTHR44218:SF6">
    <property type="entry name" value="PROTEIN SUPPRESSOR OF PHYA-105 1"/>
    <property type="match status" value="1"/>
</dbReference>
<dbReference type="Pfam" id="PF00069">
    <property type="entry name" value="Pkinase"/>
    <property type="match status" value="1"/>
</dbReference>
<dbReference type="Pfam" id="PF00400">
    <property type="entry name" value="WD40"/>
    <property type="match status" value="3"/>
</dbReference>
<dbReference type="PRINTS" id="PR00320">
    <property type="entry name" value="GPROTEINBRPT"/>
</dbReference>
<dbReference type="SMART" id="SM00320">
    <property type="entry name" value="WD40"/>
    <property type="match status" value="7"/>
</dbReference>
<dbReference type="SUPFAM" id="SSF56112">
    <property type="entry name" value="Protein kinase-like (PK-like)"/>
    <property type="match status" value="1"/>
</dbReference>
<dbReference type="SUPFAM" id="SSF50978">
    <property type="entry name" value="WD40 repeat-like"/>
    <property type="match status" value="1"/>
</dbReference>
<dbReference type="PROSITE" id="PS50011">
    <property type="entry name" value="PROTEIN_KINASE_DOM"/>
    <property type="match status" value="1"/>
</dbReference>
<dbReference type="PROSITE" id="PS00678">
    <property type="entry name" value="WD_REPEATS_1"/>
    <property type="match status" value="2"/>
</dbReference>
<dbReference type="PROSITE" id="PS50082">
    <property type="entry name" value="WD_REPEATS_2"/>
    <property type="match status" value="2"/>
</dbReference>
<dbReference type="PROSITE" id="PS50294">
    <property type="entry name" value="WD_REPEATS_REGION"/>
    <property type="match status" value="1"/>
</dbReference>
<accession>Q9SYX2</accession>
<accession>Q0WUH3</accession>
<accession>Q56WP1</accession>
<accession>Q9SKE4</accession>
<accession>Q9SKE5</accession>
<feature type="chain" id="PRO_0000363491" description="Protein SUPPRESSOR OF PHYA-105 1">
    <location>
        <begin position="1"/>
        <end position="1029"/>
    </location>
</feature>
<feature type="domain" description="Protein kinase" evidence="3">
    <location>
        <begin position="188"/>
        <end position="529"/>
    </location>
</feature>
<feature type="repeat" description="WD 1">
    <location>
        <begin position="714"/>
        <end position="753"/>
    </location>
</feature>
<feature type="repeat" description="WD 2">
    <location>
        <begin position="763"/>
        <end position="803"/>
    </location>
</feature>
<feature type="repeat" description="WD 3">
    <location>
        <begin position="806"/>
        <end position="846"/>
    </location>
</feature>
<feature type="repeat" description="WD 4">
    <location>
        <begin position="848"/>
        <end position="888"/>
    </location>
</feature>
<feature type="repeat" description="WD 5">
    <location>
        <begin position="892"/>
        <end position="930"/>
    </location>
</feature>
<feature type="repeat" description="WD 6">
    <location>
        <begin position="932"/>
        <end position="971"/>
    </location>
</feature>
<feature type="repeat" description="WD 7">
    <location>
        <begin position="997"/>
        <end position="1029"/>
    </location>
</feature>
<feature type="region of interest" description="Disordered" evidence="4">
    <location>
        <begin position="42"/>
        <end position="69"/>
    </location>
</feature>
<feature type="region of interest" description="Disordered" evidence="4">
    <location>
        <begin position="213"/>
        <end position="269"/>
    </location>
</feature>
<feature type="region of interest" description="Disordered" evidence="4">
    <location>
        <begin position="347"/>
        <end position="392"/>
    </location>
</feature>
<feature type="region of interest" description="Disordered" evidence="4">
    <location>
        <begin position="653"/>
        <end position="679"/>
    </location>
</feature>
<feature type="coiled-coil region" evidence="2">
    <location>
        <begin position="557"/>
        <end position="589"/>
    </location>
</feature>
<feature type="short sequence motif" description="DWD box">
    <location>
        <begin position="866"/>
        <end position="881"/>
    </location>
</feature>
<feature type="compositionally biased region" description="Basic and acidic residues" evidence="4">
    <location>
        <begin position="230"/>
        <end position="239"/>
    </location>
</feature>
<feature type="compositionally biased region" description="Polar residues" evidence="4">
    <location>
        <begin position="377"/>
        <end position="388"/>
    </location>
</feature>
<feature type="compositionally biased region" description="Basic and acidic residues" evidence="4">
    <location>
        <begin position="654"/>
        <end position="666"/>
    </location>
</feature>
<feature type="compositionally biased region" description="Polar residues" evidence="4">
    <location>
        <begin position="667"/>
        <end position="679"/>
    </location>
</feature>
<feature type="active site" description="Proton acceptor" evidence="3">
    <location>
        <position position="316"/>
    </location>
</feature>
<feature type="binding site" evidence="3">
    <location>
        <begin position="194"/>
        <end position="202"/>
    </location>
    <ligand>
        <name>ATP</name>
        <dbReference type="ChEBI" id="CHEBI:30616"/>
    </ligand>
</feature>
<feature type="binding site" evidence="3">
    <location>
        <position position="216"/>
    </location>
    <ligand>
        <name>ATP</name>
        <dbReference type="ChEBI" id="CHEBI:30616"/>
    </ligand>
</feature>
<feature type="mutagenesis site" description="No effect. Loss of function; when associated with K-580." evidence="15">
    <original>L</original>
    <variation>R</variation>
    <location>
        <position position="573"/>
    </location>
</feature>
<feature type="mutagenesis site" description="Loss of function. Loss of function; when associated with R-573." evidence="15">
    <original>A</original>
    <variation>K</variation>
    <location>
        <position position="580"/>
    </location>
</feature>
<feature type="mutagenesis site" description="Loss of function." evidence="15">
    <original>K</original>
    <variation>E</variation>
    <location>
        <position position="767"/>
    </location>
</feature>
<feature type="mutagenesis site" description="Loss of function." evidence="15">
    <original>W</original>
    <variation>A</variation>
    <location>
        <position position="812"/>
    </location>
</feature>
<feature type="mutagenesis site" description="Loss of function." evidence="15">
    <original>G</original>
    <variation>E</variation>
    <location>
        <position position="869"/>
    </location>
</feature>
<feature type="sequence conflict" description="In Ref. 4; BAE99225." evidence="22" ref="4">
    <original>L</original>
    <variation>S</variation>
    <location>
        <position position="19"/>
    </location>
</feature>
<proteinExistence type="evidence at protein level"/>
<protein>
    <recommendedName>
        <fullName>Protein SUPPRESSOR OF PHYA-105 1</fullName>
        <ecNumber>2.7.-.-</ecNumber>
    </recommendedName>
</protein>
<gene>
    <name type="primary">SPA1</name>
    <name type="ordered locus">At2g46340/At2g46350</name>
    <name type="ORF">F11C10.3/F11C10.4</name>
</gene>
<sequence>MPVMERVAEETVATNNIQLKARVDDVPCNKLDARHNDMVIQSETANSDCPGSSAHRNVDLTKPPPPEEAAGAKLSVEELTLGNYRIVQGSNNTNVDSPRAGKFEHLYRLARGSAFRAGDGDLDSQPRDMDQMLSRIRQQLAGAPSERQNLKPFMSRRSDQNLEAFSERLRAAGENSIMNAPALISEGVQMKTPVSSSNFSQLLLKRAMKGKGVVGKNQETPPEFVSDQDLGSKEKKLDISKSPTPHDVLPLKSSPKGNGMVSHGDGNHSKSSIGISLREFLRSSYAKREKRHGLCLFRQLVELVDSAHSKRLFLLDLRPSLFTLVPSKKLRYIGNFGKNDLESDVDEDLNRRRPVVEESSSGGRDSKKRKMDLHLNSPGNQLQATSTGRPFKRKSPVIDLNMVDARNPDSCELQQQDYIKNLSVSSVSRKQSMSTWLEEQWYTCPEEINGEDIGEKSNIYALGVLLFELLCHCESGEMHAAMMADLRHRILPPTFLSKYPKEAGFCLWLLHPEPSSRPSARDILKSELICEDDSVKSTAAAEEISELLLHFLSSLEVQKKKKASKLLQDIQTLEDDIKEAERRYSSNVSLVRSHGAIEKRVQSSPLDEHCTTSSALFVPTANTDRLMSNIRQLEDAYFFMRSQINLSSSAATARSDKTLKDRDRCSENQNENQDMSTKGKSSDQLEVFFEGLCKFARYSKFETCGTIRSGDLLNSASVVCSLSFDPDEEHIAAAGISKKIKIFDFNAFMNESVGVHYPLVEMVNKSKLSCVCWNSYIKNYLASTDYDGVVQIWDAGTGQGFSQYTEHQKRAWSVDFSPSDPTKFVSGSDDCSVKLWSINEKRSLGTIWSPANVCCVQFSSYSNHLLAFGSADYKVYCYDLRYVKTPWCTLAGHEKAVSYVKFMDSETIVSASTDNSLKLWNLNKTNSSGLSPGACSLTYKGHTNQKNFVGLSVLDGYIACGSETNEVYSYYKSLPMPMTSYKFGSVDPISGNEYFDDNGQFVSSVCWRKKSNMLVAANSTGNMKLLKLV</sequence>
<reference key="1">
    <citation type="journal article" date="1999" name="Science">
        <title>SPA1, a WD-repeat protein specific to phytochrome A signal transduction.</title>
        <authorList>
            <person name="Hoecker U."/>
            <person name="Tepperman J.M."/>
            <person name="Quail P.H."/>
        </authorList>
    </citation>
    <scope>NUCLEOTIDE SEQUENCE [MRNA]</scope>
    <scope>SUBCELLULAR LOCATION</scope>
</reference>
<reference key="2">
    <citation type="journal article" date="1999" name="Nature">
        <title>Sequence and analysis of chromosome 2 of the plant Arabidopsis thaliana.</title>
        <authorList>
            <person name="Lin X."/>
            <person name="Kaul S."/>
            <person name="Rounsley S.D."/>
            <person name="Shea T.P."/>
            <person name="Benito M.-I."/>
            <person name="Town C.D."/>
            <person name="Fujii C.Y."/>
            <person name="Mason T.M."/>
            <person name="Bowman C.L."/>
            <person name="Barnstead M.E."/>
            <person name="Feldblyum T.V."/>
            <person name="Buell C.R."/>
            <person name="Ketchum K.A."/>
            <person name="Lee J.J."/>
            <person name="Ronning C.M."/>
            <person name="Koo H.L."/>
            <person name="Moffat K.S."/>
            <person name="Cronin L.A."/>
            <person name="Shen M."/>
            <person name="Pai G."/>
            <person name="Van Aken S."/>
            <person name="Umayam L."/>
            <person name="Tallon L.J."/>
            <person name="Gill J.E."/>
            <person name="Adams M.D."/>
            <person name="Carrera A.J."/>
            <person name="Creasy T.H."/>
            <person name="Goodman H.M."/>
            <person name="Somerville C.R."/>
            <person name="Copenhaver G.P."/>
            <person name="Preuss D."/>
            <person name="Nierman W.C."/>
            <person name="White O."/>
            <person name="Eisen J.A."/>
            <person name="Salzberg S.L."/>
            <person name="Fraser C.M."/>
            <person name="Venter J.C."/>
        </authorList>
    </citation>
    <scope>NUCLEOTIDE SEQUENCE [LARGE SCALE GENOMIC DNA]</scope>
    <source>
        <strain>cv. Columbia</strain>
    </source>
</reference>
<reference key="3">
    <citation type="journal article" date="2017" name="Plant J.">
        <title>Araport11: a complete reannotation of the Arabidopsis thaliana reference genome.</title>
        <authorList>
            <person name="Cheng C.Y."/>
            <person name="Krishnakumar V."/>
            <person name="Chan A.P."/>
            <person name="Thibaud-Nissen F."/>
            <person name="Schobel S."/>
            <person name="Town C.D."/>
        </authorList>
    </citation>
    <scope>GENOME REANNOTATION</scope>
    <source>
        <strain>cv. Columbia</strain>
    </source>
</reference>
<reference key="4">
    <citation type="submission" date="2006-07" db="EMBL/GenBank/DDBJ databases">
        <title>Large-scale analysis of RIKEN Arabidopsis full-length (RAFL) cDNAs.</title>
        <authorList>
            <person name="Totoki Y."/>
            <person name="Seki M."/>
            <person name="Ishida J."/>
            <person name="Nakajima M."/>
            <person name="Enju A."/>
            <person name="Kamiya A."/>
            <person name="Narusaka M."/>
            <person name="Shin-i T."/>
            <person name="Nakagawa M."/>
            <person name="Sakamoto N."/>
            <person name="Oishi K."/>
            <person name="Kohara Y."/>
            <person name="Kobayashi M."/>
            <person name="Toyoda A."/>
            <person name="Sakaki Y."/>
            <person name="Sakurai T."/>
            <person name="Iida K."/>
            <person name="Akiyama K."/>
            <person name="Satou M."/>
            <person name="Toyoda T."/>
            <person name="Konagaya A."/>
            <person name="Carninci P."/>
            <person name="Kawai J."/>
            <person name="Hayashizaki Y."/>
            <person name="Shinozaki K."/>
        </authorList>
    </citation>
    <scope>NUCLEOTIDE SEQUENCE [LARGE SCALE MRNA]</scope>
    <source>
        <strain>cv. Columbia</strain>
    </source>
</reference>
<reference key="5">
    <citation type="journal article" date="2001" name="Plant Physiol.">
        <title>Light-induced growth promotion by SPA1 counteracts phytochrome-mediated growth inhibition during de-etiolation.</title>
        <authorList>
            <person name="Parks B.M."/>
            <person name="Hoecker U."/>
            <person name="Spalding E.P."/>
        </authorList>
    </citation>
    <scope>FUNCTION</scope>
</reference>
<reference key="6">
    <citation type="journal article" date="2001" name="J. Biol. Chem.">
        <title>The phytochrome A-specific signaling intermediate SPA1 interacts directly with COP1, a constitutive repressor of light signaling in Arabidopsis.</title>
        <authorList>
            <person name="Hoecker U."/>
            <person name="Quail P.H."/>
        </authorList>
    </citation>
    <scope>CHARACTERIZATION</scope>
    <scope>INTERACTION WITH COP1</scope>
</reference>
<reference key="7">
    <citation type="journal article" date="2002" name="Planta">
        <title>SPA1, a component of phytochrome A signal transduction, regulates the light signaling current.</title>
        <authorList>
            <person name="Baumgardt R.-L."/>
            <person name="Oliverio K.A."/>
            <person name="Casal J.J."/>
            <person name="Hoecker U."/>
        </authorList>
    </citation>
    <scope>FUNCTION</scope>
</reference>
<reference key="8">
    <citation type="journal article" date="2003" name="Nature">
        <title>LAF1 ubiquitination by COP1 controls photomorphogenesis and is stimulated by SPA1.</title>
        <authorList>
            <person name="Seo H.S."/>
            <person name="Yang J.-Y."/>
            <person name="Ishikawa M."/>
            <person name="Bolle C."/>
            <person name="Ballesteros M.L."/>
            <person name="Chua N.-H."/>
        </authorList>
    </citation>
    <scope>FUNCTION</scope>
</reference>
<reference key="9">
    <citation type="journal article" date="2003" name="Plant J.">
        <title>The SPA1-like proteins SPA3 and SPA4 repress photomorphogenesis in the light.</title>
        <authorList>
            <person name="Laubinger S."/>
            <person name="Hoecker U."/>
        </authorList>
    </citation>
    <scope>GENE FAMILY</scope>
    <scope>NOMENCLATURE</scope>
</reference>
<reference key="10">
    <citation type="journal article" date="2003" name="Genes Dev.">
        <title>The COP1-SPA1 interaction defines a critical step in phytochrome A-mediated regulation of HY5 activity.</title>
        <authorList>
            <person name="Saijo Y."/>
            <person name="Sullivan J.A."/>
            <person name="Wang H."/>
            <person name="Yang J."/>
            <person name="Shen Y."/>
            <person name="Rubio V."/>
            <person name="Ma L."/>
            <person name="Hoecker U."/>
            <person name="Deng X.W."/>
        </authorList>
    </citation>
    <scope>INTERACTION WITH COP1 AND HY5</scope>
</reference>
<reference key="11">
    <citation type="journal article" date="2004" name="Plant Cell">
        <title>The SPA quartet: a family of WD-repeat proteins with a central role in suppression of photomorphogenesis in Arabidopsis.</title>
        <authorList>
            <person name="Laubinger S."/>
            <person name="Fittinghoff K."/>
            <person name="Hoecker U."/>
        </authorList>
    </citation>
    <scope>FUNCTION</scope>
    <scope>GENE FAMILY</scope>
    <scope>NOMENCLATURE</scope>
</reference>
<reference key="12">
    <citation type="journal article" date="2005" name="Plant J.">
        <title>Repression of light signaling by Arabidopsis SPA1 involves post-translational regulation of HFR1 protein accumulation.</title>
        <authorList>
            <person name="Yang J."/>
            <person name="Lin R."/>
            <person name="Hoecker U."/>
            <person name="Liu B."/>
            <person name="Xu L."/>
            <person name="Wang H."/>
        </authorList>
    </citation>
    <scope>INTERACTION WITH HFR1</scope>
</reference>
<reference key="13">
    <citation type="journal article" date="2006" name="Plant J.">
        <title>The central coiled-coil domain and carboxyl-terminal WD-repeat domain of Arabidopsis SPA1 are responsible for mediating repression of light signaling.</title>
        <authorList>
            <person name="Yang J."/>
            <person name="Wang H."/>
        </authorList>
    </citation>
    <scope>CHARACTERIZATION</scope>
    <scope>MUTAGENESIS OF LEU-573; ALA-580; LYS-767; TRP-812 AND GLY-869</scope>
</reference>
<reference key="14">
    <citation type="journal article" date="2006" name="Plant J.">
        <title>The Arabidopsis SPA1 gene is required for circadian clock function and photoperiodic flowering.</title>
        <authorList>
            <person name="Ishikawa M."/>
            <person name="Kiba T."/>
            <person name="Chua N.-H."/>
        </authorList>
    </citation>
    <scope>FUNCTION</scope>
    <scope>INDUCTION</scope>
</reference>
<reference key="15">
    <citation type="journal article" date="2006" name="Plant J.">
        <title>Functional and expression analysis of Arabidopsis SPA genes during seedling photomorphogenesis and adult growth.</title>
        <authorList>
            <person name="Fittinghoff K."/>
            <person name="Laubinger S."/>
            <person name="Nixdorf M."/>
            <person name="Fackendahl P."/>
            <person name="Baumgardt R.-L."/>
            <person name="Batschauer A."/>
            <person name="Hoecker U."/>
        </authorList>
    </citation>
    <scope>FUNCTION</scope>
    <scope>CHARACTERIZATION</scope>
    <scope>INDUCTION BY LIGHT</scope>
</reference>
<reference key="16">
    <citation type="journal article" date="2006" name="Development">
        <title>Arabidopsis SPA proteins regulate photoperiodic flowering and interact with the floral inducer CONSTANS to regulate its stability.</title>
        <authorList>
            <person name="Laubinger S."/>
            <person name="Marchal V."/>
            <person name="Le Gourrierec J."/>
            <person name="Wenkel S."/>
            <person name="Adrian J."/>
            <person name="Jang S."/>
            <person name="Kulajta C."/>
            <person name="Braun H."/>
            <person name="Coupland G."/>
            <person name="Hoecker U."/>
        </authorList>
    </citation>
    <scope>FUNCTION</scope>
    <scope>INTERACTION WITH CO</scope>
    <scope>INDUCTION</scope>
    <scope>SUBCELLULAR LOCATION</scope>
</reference>
<reference key="17">
    <citation type="journal article" date="2008" name="Mol. Cell">
        <title>Arabidopsis COP1/SPA1 complex and FHY1/FHY3 associate with distinct phosphorylated forms of phytochrome A in balancing light signaling.</title>
        <authorList>
            <person name="Saijo Y."/>
            <person name="Zhu D."/>
            <person name="Li J."/>
            <person name="Rubio V."/>
            <person name="Zhou Z."/>
            <person name="Shen Y."/>
            <person name="Hoecker U."/>
            <person name="Wang H."/>
            <person name="Deng X.W."/>
        </authorList>
    </citation>
    <scope>INTERACTION WITH PHYA</scope>
    <scope>INDUCTION</scope>
</reference>
<reference key="18">
    <citation type="journal article" date="2008" name="Plant Cell">
        <title>Characterization of Arabidopsis and rice DWD proteins and their roles as substrate receptors for CUL4-RING E3 ubiquitin ligases.</title>
        <authorList>
            <person name="Lee J.H."/>
            <person name="Terzaghi W."/>
            <person name="Gusmaroli G."/>
            <person name="Charron J.B."/>
            <person name="Yoon H.J."/>
            <person name="Chen H."/>
            <person name="He Y.J."/>
            <person name="Xiong Y."/>
            <person name="Deng X.W."/>
        </authorList>
    </citation>
    <scope>DWD MOTIF</scope>
</reference>
<reference key="19">
    <citation type="journal article" date="2011" name="Curr. Biol.">
        <title>Blue light-dependent interaction of CRY2 with SPA1 regulates COP1 activity and floral initiation in Arabidopsis.</title>
        <authorList>
            <person name="Zuo Z."/>
            <person name="Liu H."/>
            <person name="Liu B."/>
            <person name="Liu X."/>
            <person name="Lin C."/>
        </authorList>
    </citation>
    <scope>FUNCTION</scope>
    <scope>INTERACTION WITH CRY2</scope>
</reference>
<reference key="20">
    <citation type="journal article" date="2011" name="Genes Dev.">
        <title>Blue-light-dependent interaction of cryptochrome 1 with SPA1 defines a dynamic signaling mechanism.</title>
        <authorList>
            <person name="Lian H.-L."/>
            <person name="He S.-B."/>
            <person name="Zhang Y.-C."/>
            <person name="Zhu D.-M."/>
            <person name="Zhang J.-Y."/>
            <person name="Jia K.-P."/>
            <person name="Sun S.-X."/>
            <person name="Li L."/>
            <person name="Yang H.-Q."/>
        </authorList>
    </citation>
    <scope>INTERACTION WITH CRY1 AND CRY2</scope>
    <scope>SUBCELLULAR LOCATION</scope>
    <source>
        <strain>cv. Columbia</strain>
    </source>
</reference>
<reference key="21">
    <citation type="journal article" date="2011" name="Genes Dev.">
        <title>Arabidopsis cryptochrome 1 interacts with SPA1 to suppress COP1 activity in response to blue light.</title>
        <authorList>
            <person name="Liu B."/>
            <person name="Zuo Z."/>
            <person name="Liu H."/>
            <person name="Liu X."/>
            <person name="Lin C."/>
        </authorList>
    </citation>
    <scope>INTERACTION WITH CRY1</scope>
    <scope>DISRUPTION PHENOTYPE</scope>
</reference>
<reference key="22">
    <citation type="journal article" date="2012" name="Plant Cell">
        <title>Degradation of Arabidopsis CRY2 is regulated by SPA proteins and phytochrome A.</title>
        <authorList>
            <person name="Weidler G."/>
            <person name="Zur Oven-Krockhaus S."/>
            <person name="Heunemann M."/>
            <person name="Orth C."/>
            <person name="Schleifenbaum F."/>
            <person name="Harter K."/>
            <person name="Hoecker U."/>
            <person name="Batschauer A."/>
        </authorList>
    </citation>
    <scope>INTERACTION WITH CRY2</scope>
    <scope>SUBCELLULAR LOCATION</scope>
</reference>
<name>SPA1_ARATH</name>
<comment type="function">
    <text evidence="6 8 9 11 13 14 16 20">Controls normal photoperiodic flowering and regulates circadian rhythms. Required for suppression of photomorphogenesis in dark-grown seedlings and for normal elongation growth of adult plants. Integral component of the COP1/SPA E3 ubiquitin-protein ligase complex. Involved in HY5, HFR1, LAF1 and CO degradation.</text>
</comment>
<comment type="subunit">
    <text evidence="7 10 12 16 17 18 19 20 21">Interacts with CO, COP1, HFR1, HY5 and PHYA. Light induces dissociation of the SPA1/COP1 complex. Binds to CRY1 in response to blue light, this interaction prevents SPA1/COP1 complex formation but stimulate CRY2/COP1 complex, and thus avoid COP1-dependent degradation of the transcription factor HY5 by the proteasome and promotes hypocotyl elongation (PubMed:21511871, PubMed:21511872, PubMed:21514160, PubMed:22739826).</text>
</comment>
<comment type="interaction">
    <interactant intactId="EBI-626992">
        <id>Q9SYX2</id>
    </interactant>
    <interactant intactId="EBI-1112154">
        <id>O50055</id>
        <label>COL1</label>
    </interactant>
    <organismsDiffer>false</organismsDiffer>
    <experiments>10</experiments>
</comment>
<comment type="interaction">
    <interactant intactId="EBI-626992">
        <id>Q9SYX2</id>
    </interactant>
    <interactant intactId="EBI-301649">
        <id>P43254</id>
        <label>COP1</label>
    </interactant>
    <organismsDiffer>false</organismsDiffer>
    <experiments>17</experiments>
</comment>
<comment type="interaction">
    <interactant intactId="EBI-626992">
        <id>Q9SYX2</id>
    </interactant>
    <interactant intactId="EBI-626001">
        <id>Q9FE22</id>
        <label>HFR1</label>
    </interactant>
    <organismsDiffer>false</organismsDiffer>
    <experiments>3</experiments>
</comment>
<comment type="interaction">
    <interactant intactId="EBI-626992">
        <id>Q9SYX2</id>
    </interactant>
    <interactant intactId="EBI-626992">
        <id>Q9SYX2</id>
        <label>SPA1</label>
    </interactant>
    <organismsDiffer>false</organismsDiffer>
    <experiments>6</experiments>
</comment>
<comment type="interaction">
    <interactant intactId="EBI-626992">
        <id>Q9SYX2</id>
    </interactant>
    <interactant intactId="EBI-626921">
        <id>Q9LJR3</id>
        <label>SPA3</label>
    </interactant>
    <organismsDiffer>false</organismsDiffer>
    <experiments>7</experiments>
</comment>
<comment type="interaction">
    <interactant intactId="EBI-626992">
        <id>Q9SYX2</id>
    </interactant>
    <interactant intactId="EBI-626943">
        <id>Q94BM7</id>
        <label>SPA4</label>
    </interactant>
    <organismsDiffer>false</organismsDiffer>
    <experiments>9</experiments>
</comment>
<comment type="subcellular location">
    <subcellularLocation>
        <location evidence="5 16">Nucleus speckle</location>
    </subcellularLocation>
    <subcellularLocation>
        <location evidence="21">Nucleus</location>
    </subcellularLocation>
    <subcellularLocation>
        <location evidence="19">Nucleus</location>
        <location evidence="19">PML body</location>
    </subcellularLocation>
    <text evidence="19">Present in nuclear bodies (NBs).</text>
</comment>
<comment type="induction">
    <text evidence="13 14 16 17">By PHYA under continuous far-red light. Circadian-regulation under constant light. Up-regulated by red, far-red and blue light, and during the night phase under short-day conditions.</text>
</comment>
<comment type="domain">
    <text evidence="1">The coiled-coil domain (557-589) and the WD-repeat domain are sufficient for SPA1 function. The coiled-coil domain is necessary and sufficient for interactions with HFR1 and COP1. The protein kinase domain may play a role in promoting destabilization of SPA1 under far-red light. The DWD box is required for interaction with DDB1A (By similarity).</text>
</comment>
<comment type="disruption phenotype">
    <text evidence="18">Reduced hypocotyl elongation in blue light.</text>
</comment>
<comment type="sequence caution" evidence="22">
    <conflict type="erroneous gene model prediction">
        <sequence resource="EMBL-CDS" id="AAD23037"/>
    </conflict>
    <text>Was originally thought to correspond to two different genes At2g46340 and At2g46350.</text>
</comment>
<comment type="sequence caution" evidence="22">
    <conflict type="erroneous gene model prediction">
        <sequence resource="EMBL-CDS" id="AAD23038"/>
    </conflict>
    <text>Was originally thought to correspond to two different genes At2g46340 and At2g46350.</text>
</comment>
<organism>
    <name type="scientific">Arabidopsis thaliana</name>
    <name type="common">Mouse-ear cress</name>
    <dbReference type="NCBI Taxonomy" id="3702"/>
    <lineage>
        <taxon>Eukaryota</taxon>
        <taxon>Viridiplantae</taxon>
        <taxon>Streptophyta</taxon>
        <taxon>Embryophyta</taxon>
        <taxon>Tracheophyta</taxon>
        <taxon>Spermatophyta</taxon>
        <taxon>Magnoliopsida</taxon>
        <taxon>eudicotyledons</taxon>
        <taxon>Gunneridae</taxon>
        <taxon>Pentapetalae</taxon>
        <taxon>rosids</taxon>
        <taxon>malvids</taxon>
        <taxon>Brassicales</taxon>
        <taxon>Brassicaceae</taxon>
        <taxon>Camelineae</taxon>
        <taxon>Arabidopsis</taxon>
    </lineage>
</organism>